<dbReference type="EC" id="2.7.7.6" evidence="1"/>
<dbReference type="EMBL" id="BA000030">
    <property type="protein sequence ID" value="BAC72627.1"/>
    <property type="molecule type" value="Genomic_DNA"/>
</dbReference>
<dbReference type="RefSeq" id="WP_010986334.1">
    <property type="nucleotide sequence ID" value="NZ_JZJK01000077.1"/>
</dbReference>
<dbReference type="SMR" id="Q82DQ4"/>
<dbReference type="GeneID" id="41541999"/>
<dbReference type="KEGG" id="sma:SAVERM_4915"/>
<dbReference type="eggNOG" id="COG0086">
    <property type="taxonomic scope" value="Bacteria"/>
</dbReference>
<dbReference type="HOGENOM" id="CLU_000524_3_1_11"/>
<dbReference type="OrthoDB" id="9815296at2"/>
<dbReference type="Proteomes" id="UP000000428">
    <property type="component" value="Chromosome"/>
</dbReference>
<dbReference type="GO" id="GO:0000428">
    <property type="term" value="C:DNA-directed RNA polymerase complex"/>
    <property type="evidence" value="ECO:0007669"/>
    <property type="project" value="UniProtKB-KW"/>
</dbReference>
<dbReference type="GO" id="GO:0003677">
    <property type="term" value="F:DNA binding"/>
    <property type="evidence" value="ECO:0007669"/>
    <property type="project" value="UniProtKB-UniRule"/>
</dbReference>
<dbReference type="GO" id="GO:0003899">
    <property type="term" value="F:DNA-directed RNA polymerase activity"/>
    <property type="evidence" value="ECO:0007669"/>
    <property type="project" value="UniProtKB-UniRule"/>
</dbReference>
<dbReference type="GO" id="GO:0000287">
    <property type="term" value="F:magnesium ion binding"/>
    <property type="evidence" value="ECO:0007669"/>
    <property type="project" value="UniProtKB-UniRule"/>
</dbReference>
<dbReference type="GO" id="GO:0008270">
    <property type="term" value="F:zinc ion binding"/>
    <property type="evidence" value="ECO:0007669"/>
    <property type="project" value="UniProtKB-UniRule"/>
</dbReference>
<dbReference type="GO" id="GO:0006351">
    <property type="term" value="P:DNA-templated transcription"/>
    <property type="evidence" value="ECO:0007669"/>
    <property type="project" value="UniProtKB-UniRule"/>
</dbReference>
<dbReference type="CDD" id="cd02655">
    <property type="entry name" value="RNAP_beta'_C"/>
    <property type="match status" value="1"/>
</dbReference>
<dbReference type="CDD" id="cd01609">
    <property type="entry name" value="RNAP_beta'_N"/>
    <property type="match status" value="1"/>
</dbReference>
<dbReference type="FunFam" id="1.10.150.390:FF:000002">
    <property type="entry name" value="DNA-directed RNA polymerase subunit beta"/>
    <property type="match status" value="1"/>
</dbReference>
<dbReference type="FunFam" id="1.10.40.90:FF:000001">
    <property type="entry name" value="DNA-directed RNA polymerase subunit beta"/>
    <property type="match status" value="1"/>
</dbReference>
<dbReference type="FunFam" id="4.10.860.120:FF:000001">
    <property type="entry name" value="DNA-directed RNA polymerase subunit beta"/>
    <property type="match status" value="1"/>
</dbReference>
<dbReference type="Gene3D" id="1.10.132.30">
    <property type="match status" value="1"/>
</dbReference>
<dbReference type="Gene3D" id="1.10.150.390">
    <property type="match status" value="1"/>
</dbReference>
<dbReference type="Gene3D" id="1.10.1790.20">
    <property type="match status" value="1"/>
</dbReference>
<dbReference type="Gene3D" id="1.10.40.90">
    <property type="match status" value="1"/>
</dbReference>
<dbReference type="Gene3D" id="2.40.40.20">
    <property type="match status" value="1"/>
</dbReference>
<dbReference type="Gene3D" id="2.40.50.100">
    <property type="match status" value="1"/>
</dbReference>
<dbReference type="Gene3D" id="4.10.860.120">
    <property type="entry name" value="RNA polymerase II, clamp domain"/>
    <property type="match status" value="1"/>
</dbReference>
<dbReference type="Gene3D" id="1.10.274.100">
    <property type="entry name" value="RNA polymerase Rpb1, domain 3"/>
    <property type="match status" value="1"/>
</dbReference>
<dbReference type="HAMAP" id="MF_01322">
    <property type="entry name" value="RNApol_bact_RpoC"/>
    <property type="match status" value="1"/>
</dbReference>
<dbReference type="InterPro" id="IPR045867">
    <property type="entry name" value="DNA-dir_RpoC_beta_prime"/>
</dbReference>
<dbReference type="InterPro" id="IPR012754">
    <property type="entry name" value="DNA-dir_RpoC_beta_prime_bact"/>
</dbReference>
<dbReference type="InterPro" id="IPR000722">
    <property type="entry name" value="RNA_pol_asu"/>
</dbReference>
<dbReference type="InterPro" id="IPR006592">
    <property type="entry name" value="RNA_pol_N"/>
</dbReference>
<dbReference type="InterPro" id="IPR007080">
    <property type="entry name" value="RNA_pol_Rpb1_1"/>
</dbReference>
<dbReference type="InterPro" id="IPR007066">
    <property type="entry name" value="RNA_pol_Rpb1_3"/>
</dbReference>
<dbReference type="InterPro" id="IPR042102">
    <property type="entry name" value="RNA_pol_Rpb1_3_sf"/>
</dbReference>
<dbReference type="InterPro" id="IPR007083">
    <property type="entry name" value="RNA_pol_Rpb1_4"/>
</dbReference>
<dbReference type="InterPro" id="IPR007081">
    <property type="entry name" value="RNA_pol_Rpb1_5"/>
</dbReference>
<dbReference type="InterPro" id="IPR044893">
    <property type="entry name" value="RNA_pol_Rpb1_clamp_domain"/>
</dbReference>
<dbReference type="InterPro" id="IPR038120">
    <property type="entry name" value="Rpb1_funnel_sf"/>
</dbReference>
<dbReference type="NCBIfam" id="NF011498">
    <property type="entry name" value="PRK14906.1"/>
    <property type="match status" value="1"/>
</dbReference>
<dbReference type="NCBIfam" id="TIGR02386">
    <property type="entry name" value="rpoC_TIGR"/>
    <property type="match status" value="1"/>
</dbReference>
<dbReference type="PANTHER" id="PTHR19376">
    <property type="entry name" value="DNA-DIRECTED RNA POLYMERASE"/>
    <property type="match status" value="1"/>
</dbReference>
<dbReference type="PANTHER" id="PTHR19376:SF54">
    <property type="entry name" value="DNA-DIRECTED RNA POLYMERASE SUBUNIT BETA"/>
    <property type="match status" value="1"/>
</dbReference>
<dbReference type="Pfam" id="PF04997">
    <property type="entry name" value="RNA_pol_Rpb1_1"/>
    <property type="match status" value="1"/>
</dbReference>
<dbReference type="Pfam" id="PF00623">
    <property type="entry name" value="RNA_pol_Rpb1_2"/>
    <property type="match status" value="2"/>
</dbReference>
<dbReference type="Pfam" id="PF04983">
    <property type="entry name" value="RNA_pol_Rpb1_3"/>
    <property type="match status" value="1"/>
</dbReference>
<dbReference type="Pfam" id="PF05000">
    <property type="entry name" value="RNA_pol_Rpb1_4"/>
    <property type="match status" value="1"/>
</dbReference>
<dbReference type="Pfam" id="PF04998">
    <property type="entry name" value="RNA_pol_Rpb1_5"/>
    <property type="match status" value="1"/>
</dbReference>
<dbReference type="SMART" id="SM00663">
    <property type="entry name" value="RPOLA_N"/>
    <property type="match status" value="1"/>
</dbReference>
<dbReference type="SUPFAM" id="SSF64484">
    <property type="entry name" value="beta and beta-prime subunits of DNA dependent RNA-polymerase"/>
    <property type="match status" value="1"/>
</dbReference>
<feature type="chain" id="PRO_0000067805" description="DNA-directed RNA polymerase subunit beta'">
    <location>
        <begin position="1"/>
        <end position="1299"/>
    </location>
</feature>
<feature type="region of interest" description="Disordered" evidence="2">
    <location>
        <begin position="385"/>
        <end position="405"/>
    </location>
</feature>
<feature type="binding site" evidence="1">
    <location>
        <position position="60"/>
    </location>
    <ligand>
        <name>Zn(2+)</name>
        <dbReference type="ChEBI" id="CHEBI:29105"/>
        <label>1</label>
    </ligand>
</feature>
<feature type="binding site" evidence="1">
    <location>
        <position position="62"/>
    </location>
    <ligand>
        <name>Zn(2+)</name>
        <dbReference type="ChEBI" id="CHEBI:29105"/>
        <label>1</label>
    </ligand>
</feature>
<feature type="binding site" evidence="1">
    <location>
        <position position="75"/>
    </location>
    <ligand>
        <name>Zn(2+)</name>
        <dbReference type="ChEBI" id="CHEBI:29105"/>
        <label>1</label>
    </ligand>
</feature>
<feature type="binding site" evidence="1">
    <location>
        <position position="78"/>
    </location>
    <ligand>
        <name>Zn(2+)</name>
        <dbReference type="ChEBI" id="CHEBI:29105"/>
        <label>1</label>
    </ligand>
</feature>
<feature type="binding site" evidence="1">
    <location>
        <position position="535"/>
    </location>
    <ligand>
        <name>Mg(2+)</name>
        <dbReference type="ChEBI" id="CHEBI:18420"/>
    </ligand>
</feature>
<feature type="binding site" evidence="1">
    <location>
        <position position="537"/>
    </location>
    <ligand>
        <name>Mg(2+)</name>
        <dbReference type="ChEBI" id="CHEBI:18420"/>
    </ligand>
</feature>
<feature type="binding site" evidence="1">
    <location>
        <position position="539"/>
    </location>
    <ligand>
        <name>Mg(2+)</name>
        <dbReference type="ChEBI" id="CHEBI:18420"/>
    </ligand>
</feature>
<feature type="binding site" evidence="1">
    <location>
        <position position="886"/>
    </location>
    <ligand>
        <name>Zn(2+)</name>
        <dbReference type="ChEBI" id="CHEBI:29105"/>
        <label>2</label>
    </ligand>
</feature>
<feature type="binding site" evidence="1">
    <location>
        <position position="962"/>
    </location>
    <ligand>
        <name>Zn(2+)</name>
        <dbReference type="ChEBI" id="CHEBI:29105"/>
        <label>2</label>
    </ligand>
</feature>
<feature type="binding site" evidence="1">
    <location>
        <position position="969"/>
    </location>
    <ligand>
        <name>Zn(2+)</name>
        <dbReference type="ChEBI" id="CHEBI:29105"/>
        <label>2</label>
    </ligand>
</feature>
<feature type="binding site" evidence="1">
    <location>
        <position position="972"/>
    </location>
    <ligand>
        <name>Zn(2+)</name>
        <dbReference type="ChEBI" id="CHEBI:29105"/>
        <label>2</label>
    </ligand>
</feature>
<protein>
    <recommendedName>
        <fullName evidence="1">DNA-directed RNA polymerase subunit beta'</fullName>
        <shortName evidence="1">RNAP subunit beta'</shortName>
        <ecNumber evidence="1">2.7.7.6</ecNumber>
    </recommendedName>
    <alternativeName>
        <fullName evidence="1">RNA polymerase subunit beta'</fullName>
    </alternativeName>
    <alternativeName>
        <fullName evidence="1">Transcriptase subunit beta'</fullName>
    </alternativeName>
</protein>
<organism>
    <name type="scientific">Streptomyces avermitilis (strain ATCC 31267 / DSM 46492 / JCM 5070 / NBRC 14893 / NCIMB 12804 / NRRL 8165 / MA-4680)</name>
    <dbReference type="NCBI Taxonomy" id="227882"/>
    <lineage>
        <taxon>Bacteria</taxon>
        <taxon>Bacillati</taxon>
        <taxon>Actinomycetota</taxon>
        <taxon>Actinomycetes</taxon>
        <taxon>Kitasatosporales</taxon>
        <taxon>Streptomycetaceae</taxon>
        <taxon>Streptomyces</taxon>
    </lineage>
</organism>
<gene>
    <name evidence="1" type="primary">rpoC</name>
    <name type="ordered locus">SAV_4915</name>
</gene>
<evidence type="ECO:0000255" key="1">
    <source>
        <dbReference type="HAMAP-Rule" id="MF_01322"/>
    </source>
</evidence>
<evidence type="ECO:0000256" key="2">
    <source>
        <dbReference type="SAM" id="MobiDB-lite"/>
    </source>
</evidence>
<proteinExistence type="inferred from homology"/>
<keyword id="KW-0240">DNA-directed RNA polymerase</keyword>
<keyword id="KW-0460">Magnesium</keyword>
<keyword id="KW-0479">Metal-binding</keyword>
<keyword id="KW-0548">Nucleotidyltransferase</keyword>
<keyword id="KW-1185">Reference proteome</keyword>
<keyword id="KW-0804">Transcription</keyword>
<keyword id="KW-0808">Transferase</keyword>
<keyword id="KW-0862">Zinc</keyword>
<reference key="1">
    <citation type="journal article" date="2001" name="Proc. Natl. Acad. Sci. U.S.A.">
        <title>Genome sequence of an industrial microorganism Streptomyces avermitilis: deducing the ability of producing secondary metabolites.</title>
        <authorList>
            <person name="Omura S."/>
            <person name="Ikeda H."/>
            <person name="Ishikawa J."/>
            <person name="Hanamoto A."/>
            <person name="Takahashi C."/>
            <person name="Shinose M."/>
            <person name="Takahashi Y."/>
            <person name="Horikawa H."/>
            <person name="Nakazawa H."/>
            <person name="Osonoe T."/>
            <person name="Kikuchi H."/>
            <person name="Shiba T."/>
            <person name="Sakaki Y."/>
            <person name="Hattori M."/>
        </authorList>
    </citation>
    <scope>NUCLEOTIDE SEQUENCE [LARGE SCALE GENOMIC DNA]</scope>
    <source>
        <strain>ATCC 31267 / DSM 46492 / JCM 5070 / NBRC 14893 / NCIMB 12804 / NRRL 8165 / MA-4680</strain>
    </source>
</reference>
<reference key="2">
    <citation type="journal article" date="2003" name="Nat. Biotechnol.">
        <title>Complete genome sequence and comparative analysis of the industrial microorganism Streptomyces avermitilis.</title>
        <authorList>
            <person name="Ikeda H."/>
            <person name="Ishikawa J."/>
            <person name="Hanamoto A."/>
            <person name="Shinose M."/>
            <person name="Kikuchi H."/>
            <person name="Shiba T."/>
            <person name="Sakaki Y."/>
            <person name="Hattori M."/>
            <person name="Omura S."/>
        </authorList>
    </citation>
    <scope>NUCLEOTIDE SEQUENCE [LARGE SCALE GENOMIC DNA]</scope>
    <source>
        <strain>ATCC 31267 / DSM 46492 / JCM 5070 / NBRC 14893 / NCIMB 12804 / NRRL 8165 / MA-4680</strain>
    </source>
</reference>
<name>RPOC_STRAW</name>
<comment type="function">
    <text evidence="1">DNA-dependent RNA polymerase catalyzes the transcription of DNA into RNA using the four ribonucleoside triphosphates as substrates.</text>
</comment>
<comment type="catalytic activity">
    <reaction evidence="1">
        <text>RNA(n) + a ribonucleoside 5'-triphosphate = RNA(n+1) + diphosphate</text>
        <dbReference type="Rhea" id="RHEA:21248"/>
        <dbReference type="Rhea" id="RHEA-COMP:14527"/>
        <dbReference type="Rhea" id="RHEA-COMP:17342"/>
        <dbReference type="ChEBI" id="CHEBI:33019"/>
        <dbReference type="ChEBI" id="CHEBI:61557"/>
        <dbReference type="ChEBI" id="CHEBI:140395"/>
        <dbReference type="EC" id="2.7.7.6"/>
    </reaction>
</comment>
<comment type="cofactor">
    <cofactor evidence="1">
        <name>Mg(2+)</name>
        <dbReference type="ChEBI" id="CHEBI:18420"/>
    </cofactor>
    <text evidence="1">Binds 1 Mg(2+) ion per subunit.</text>
</comment>
<comment type="cofactor">
    <cofactor evidence="1">
        <name>Zn(2+)</name>
        <dbReference type="ChEBI" id="CHEBI:29105"/>
    </cofactor>
    <text evidence="1">Binds 2 Zn(2+) ions per subunit.</text>
</comment>
<comment type="subunit">
    <text evidence="1">The RNAP catalytic core consists of 2 alpha, 1 beta, 1 beta' and 1 omega subunit. When a sigma factor is associated with the core the holoenzyme is formed, which can initiate transcription.</text>
</comment>
<comment type="similarity">
    <text evidence="1">Belongs to the RNA polymerase beta' chain family.</text>
</comment>
<sequence>MLDVNFFDELRIGLATADDIRQWSHGEVKKPETINYRTLKPEKDGLFCEKIFGPTRDWECYCGKYKRVRFKGIICERCGVEVTRAKVRRERMGHIELAAPVTHIWYFKGVPSRLGYLLDLAPKDLEKVIYFAAYMITYVDDERRTRDLPSLEAHVSVERQQIENRRDSDLEARAKKLETDLAELEAEGAKADVRRKVREGAEREMKQLRDRAQREIDRLDEVWTRFKNLKVQDLEGDELLYRELRDRFGTYFDGSMGAAALQKRLESFDLDEEAERLREIIRTGKGQKKTRALKRLKVVSAFLQTSNSPKGMVLDCVPVIPPDLRPMVQLDGGRFATSDLNDLYRRVINRNNRLKRLLDLGAPEIIVNNEKRMLQEAVDALFDNGRRGRPVTGPGNRPLKSLSDMLKGKQGRFRQNLLGKRVDYSARSVIVVGPQLKLHQCGLPKAMALELFKPFVMKRLVDLNHAQNIKSAKRMVERGRTVVYDVLEEVIAEHPVLLNRAPTLHRLGIQAFEPQLVEGKAIQIHPLVCTAFNADFDGDQMAVHLPLSAEAQAEARILMLSSNNILKPADGRPVTMPTQDMVLGLFFLTTDGALRNVKGEERSFASVAEAIMAFDAGELSLQSRVDIRFPVGTIPPRGWTPPAREEGEPEWQQGDTFRLRTTLGRALFNELLPEDYPFVDYEVGKKQLSEIVNDLAERYPKVIVAATLDNLKAAGFYWATRSGVTVAISDIVVPEAKKEIVKGYEAQDEKVQKQYERGLITKDERTQELIAIWTKATNEVAEAMNANFPKTNPIFMMVDSGARGNMMQMRQIAGMRGLVSNAKNETIPRPIKASFREGLSVLEYFISTHGARKGLADTALRTADSGYLTRRLVDVSQDVIIREEDCGTERGLKLKIAERGADGVLRKTDDVETSVYARMLAEDVVIDGKVIAPANVDLGDVLIDQLVHHGVEEVKTRSILTCESQVGTCAMCYGRSLATGKLVDIGEAVGIIAAQSIGEPGTQLTMRTFHTGGVAGDDITQGLPRVVELFEARTPKGVAPISEASGRVRIEETEKTKKIVVTPDDGSDETAFPISKRARVLVTEGEHVEVGQKLTVGATNPHDVLRILGQRAVQVHLVGEVQKVYNSQGVSIHDKHIEIIIRQMLRRVTIIESGDAELLPGELVERSKFETENRRVVQEGGHPASGRPQLMGITKASLATESWLSAASFQETTRVLTDAAINAKSDSLIGLKENVIIGKLIPAGTGLSRYRNIRVEPTEEAKAAMYSAVGYDDIDYSPFGTGSGQAVPLEDYDYGPYNQ</sequence>
<accession>Q82DQ4</accession>